<feature type="chain" id="PRO_1000032055" description="Elongation factor 4">
    <location>
        <begin position="1"/>
        <end position="596"/>
    </location>
</feature>
<feature type="domain" description="tr-type G">
    <location>
        <begin position="2"/>
        <end position="184"/>
    </location>
</feature>
<feature type="binding site" evidence="1">
    <location>
        <begin position="14"/>
        <end position="19"/>
    </location>
    <ligand>
        <name>GTP</name>
        <dbReference type="ChEBI" id="CHEBI:37565"/>
    </ligand>
</feature>
<feature type="binding site" evidence="1">
    <location>
        <begin position="131"/>
        <end position="134"/>
    </location>
    <ligand>
        <name>GTP</name>
        <dbReference type="ChEBI" id="CHEBI:37565"/>
    </ligand>
</feature>
<name>LEPA_SHESW</name>
<gene>
    <name evidence="1" type="primary">lepA</name>
    <name type="ordered locus">Sputw3181_3007</name>
</gene>
<organism>
    <name type="scientific">Shewanella sp. (strain W3-18-1)</name>
    <dbReference type="NCBI Taxonomy" id="351745"/>
    <lineage>
        <taxon>Bacteria</taxon>
        <taxon>Pseudomonadati</taxon>
        <taxon>Pseudomonadota</taxon>
        <taxon>Gammaproteobacteria</taxon>
        <taxon>Alteromonadales</taxon>
        <taxon>Shewanellaceae</taxon>
        <taxon>Shewanella</taxon>
    </lineage>
</organism>
<dbReference type="EC" id="3.6.5.n1" evidence="1"/>
<dbReference type="EMBL" id="CP000503">
    <property type="protein sequence ID" value="ABM25824.1"/>
    <property type="molecule type" value="Genomic_DNA"/>
</dbReference>
<dbReference type="RefSeq" id="WP_011790276.1">
    <property type="nucleotide sequence ID" value="NC_008750.1"/>
</dbReference>
<dbReference type="SMR" id="A1RMC9"/>
<dbReference type="KEGG" id="shw:Sputw3181_3007"/>
<dbReference type="HOGENOM" id="CLU_009995_3_3_6"/>
<dbReference type="Proteomes" id="UP000002597">
    <property type="component" value="Chromosome"/>
</dbReference>
<dbReference type="GO" id="GO:0005886">
    <property type="term" value="C:plasma membrane"/>
    <property type="evidence" value="ECO:0007669"/>
    <property type="project" value="UniProtKB-SubCell"/>
</dbReference>
<dbReference type="GO" id="GO:0005525">
    <property type="term" value="F:GTP binding"/>
    <property type="evidence" value="ECO:0007669"/>
    <property type="project" value="UniProtKB-UniRule"/>
</dbReference>
<dbReference type="GO" id="GO:0003924">
    <property type="term" value="F:GTPase activity"/>
    <property type="evidence" value="ECO:0007669"/>
    <property type="project" value="UniProtKB-UniRule"/>
</dbReference>
<dbReference type="GO" id="GO:0097216">
    <property type="term" value="F:guanosine tetraphosphate binding"/>
    <property type="evidence" value="ECO:0007669"/>
    <property type="project" value="UniProtKB-ARBA"/>
</dbReference>
<dbReference type="GO" id="GO:0043022">
    <property type="term" value="F:ribosome binding"/>
    <property type="evidence" value="ECO:0007669"/>
    <property type="project" value="UniProtKB-UniRule"/>
</dbReference>
<dbReference type="GO" id="GO:0003746">
    <property type="term" value="F:translation elongation factor activity"/>
    <property type="evidence" value="ECO:0007669"/>
    <property type="project" value="UniProtKB-UniRule"/>
</dbReference>
<dbReference type="GO" id="GO:0045727">
    <property type="term" value="P:positive regulation of translation"/>
    <property type="evidence" value="ECO:0007669"/>
    <property type="project" value="UniProtKB-UniRule"/>
</dbReference>
<dbReference type="CDD" id="cd03699">
    <property type="entry name" value="EF4_II"/>
    <property type="match status" value="1"/>
</dbReference>
<dbReference type="CDD" id="cd16260">
    <property type="entry name" value="EF4_III"/>
    <property type="match status" value="1"/>
</dbReference>
<dbReference type="CDD" id="cd01890">
    <property type="entry name" value="LepA"/>
    <property type="match status" value="1"/>
</dbReference>
<dbReference type="CDD" id="cd03709">
    <property type="entry name" value="lepA_C"/>
    <property type="match status" value="1"/>
</dbReference>
<dbReference type="FunFam" id="3.40.50.300:FF:000078">
    <property type="entry name" value="Elongation factor 4"/>
    <property type="match status" value="1"/>
</dbReference>
<dbReference type="FunFam" id="2.40.30.10:FF:000015">
    <property type="entry name" value="Translation factor GUF1, mitochondrial"/>
    <property type="match status" value="1"/>
</dbReference>
<dbReference type="FunFam" id="3.30.70.240:FF:000007">
    <property type="entry name" value="Translation factor GUF1, mitochondrial"/>
    <property type="match status" value="1"/>
</dbReference>
<dbReference type="FunFam" id="3.30.70.2570:FF:000001">
    <property type="entry name" value="Translation factor GUF1, mitochondrial"/>
    <property type="match status" value="1"/>
</dbReference>
<dbReference type="FunFam" id="3.30.70.870:FF:000004">
    <property type="entry name" value="Translation factor GUF1, mitochondrial"/>
    <property type="match status" value="1"/>
</dbReference>
<dbReference type="Gene3D" id="3.30.70.240">
    <property type="match status" value="1"/>
</dbReference>
<dbReference type="Gene3D" id="3.30.70.2570">
    <property type="entry name" value="Elongation factor 4, C-terminal domain"/>
    <property type="match status" value="1"/>
</dbReference>
<dbReference type="Gene3D" id="3.30.70.870">
    <property type="entry name" value="Elongation Factor G (Translational Gtpase), domain 3"/>
    <property type="match status" value="1"/>
</dbReference>
<dbReference type="Gene3D" id="3.40.50.300">
    <property type="entry name" value="P-loop containing nucleotide triphosphate hydrolases"/>
    <property type="match status" value="1"/>
</dbReference>
<dbReference type="Gene3D" id="2.40.30.10">
    <property type="entry name" value="Translation factors"/>
    <property type="match status" value="1"/>
</dbReference>
<dbReference type="HAMAP" id="MF_00071">
    <property type="entry name" value="LepA"/>
    <property type="match status" value="1"/>
</dbReference>
<dbReference type="InterPro" id="IPR006297">
    <property type="entry name" value="EF-4"/>
</dbReference>
<dbReference type="InterPro" id="IPR035647">
    <property type="entry name" value="EFG_III/V"/>
</dbReference>
<dbReference type="InterPro" id="IPR000640">
    <property type="entry name" value="EFG_V-like"/>
</dbReference>
<dbReference type="InterPro" id="IPR004161">
    <property type="entry name" value="EFTu-like_2"/>
</dbReference>
<dbReference type="InterPro" id="IPR031157">
    <property type="entry name" value="G_TR_CS"/>
</dbReference>
<dbReference type="InterPro" id="IPR038363">
    <property type="entry name" value="LepA_C_sf"/>
</dbReference>
<dbReference type="InterPro" id="IPR013842">
    <property type="entry name" value="LepA_CTD"/>
</dbReference>
<dbReference type="InterPro" id="IPR035654">
    <property type="entry name" value="LepA_IV"/>
</dbReference>
<dbReference type="InterPro" id="IPR027417">
    <property type="entry name" value="P-loop_NTPase"/>
</dbReference>
<dbReference type="InterPro" id="IPR005225">
    <property type="entry name" value="Small_GTP-bd"/>
</dbReference>
<dbReference type="InterPro" id="IPR000795">
    <property type="entry name" value="T_Tr_GTP-bd_dom"/>
</dbReference>
<dbReference type="InterPro" id="IPR009000">
    <property type="entry name" value="Transl_B-barrel_sf"/>
</dbReference>
<dbReference type="NCBIfam" id="TIGR01393">
    <property type="entry name" value="lepA"/>
    <property type="match status" value="1"/>
</dbReference>
<dbReference type="NCBIfam" id="TIGR00231">
    <property type="entry name" value="small_GTP"/>
    <property type="match status" value="1"/>
</dbReference>
<dbReference type="PANTHER" id="PTHR43512:SF4">
    <property type="entry name" value="TRANSLATION FACTOR GUF1 HOMOLOG, CHLOROPLASTIC"/>
    <property type="match status" value="1"/>
</dbReference>
<dbReference type="PANTHER" id="PTHR43512">
    <property type="entry name" value="TRANSLATION FACTOR GUF1-RELATED"/>
    <property type="match status" value="1"/>
</dbReference>
<dbReference type="Pfam" id="PF00679">
    <property type="entry name" value="EFG_C"/>
    <property type="match status" value="1"/>
</dbReference>
<dbReference type="Pfam" id="PF00009">
    <property type="entry name" value="GTP_EFTU"/>
    <property type="match status" value="1"/>
</dbReference>
<dbReference type="Pfam" id="PF03144">
    <property type="entry name" value="GTP_EFTU_D2"/>
    <property type="match status" value="1"/>
</dbReference>
<dbReference type="Pfam" id="PF06421">
    <property type="entry name" value="LepA_C"/>
    <property type="match status" value="1"/>
</dbReference>
<dbReference type="PRINTS" id="PR00315">
    <property type="entry name" value="ELONGATNFCT"/>
</dbReference>
<dbReference type="SMART" id="SM00838">
    <property type="entry name" value="EFG_C"/>
    <property type="match status" value="1"/>
</dbReference>
<dbReference type="SUPFAM" id="SSF54980">
    <property type="entry name" value="EF-G C-terminal domain-like"/>
    <property type="match status" value="2"/>
</dbReference>
<dbReference type="SUPFAM" id="SSF52540">
    <property type="entry name" value="P-loop containing nucleoside triphosphate hydrolases"/>
    <property type="match status" value="1"/>
</dbReference>
<dbReference type="SUPFAM" id="SSF50447">
    <property type="entry name" value="Translation proteins"/>
    <property type="match status" value="1"/>
</dbReference>
<dbReference type="PROSITE" id="PS00301">
    <property type="entry name" value="G_TR_1"/>
    <property type="match status" value="1"/>
</dbReference>
<dbReference type="PROSITE" id="PS51722">
    <property type="entry name" value="G_TR_2"/>
    <property type="match status" value="1"/>
</dbReference>
<sequence>MKHIRNFSIIAHIDHGKSTLSDRLIQVCGGLTDREMDSQVLDSMDLERERGITIKAQSVTLDYKAKDGQVYQLNFIDTPGHVDFSYEVSRSLAACEGALLVVDAGQGVEAQTLANCYTALDMNLDVVPILNKIDLPQADPERVAAEIEDIVGIDAMDAVRCSAKTGVGVDEVLEVIVAKIPPPEGDPDAPLQALIIDSWFDNYLGVVSLVRIKHGSLKKGDKFKVMSTGQNHTADRVGIFTPKQTDKTELKTGEVGFVIAGLKEIHGAPVGDTLTLAKNGADKPLPGFKKVKPQVYAGVFPISTDEYENFRDALNKLSLNDASLFFEPESSSALGFGFRIGYLGLLHMEIVQERLEREYNLELITTAPTVVYEVVMTNGETIYVDNPSDLPAINNIEEMREPIVEANILVPKEYLGNVITLCIEKRGTQVNMVYHGNQVAVTYHLPMAEVVMDFFDRLKSTSRGYASLEYNFIRFDPADMVRLDILINGDRVDALAMVIHRSNIRHRGLALVEKMKELIPRQMFDIAIQAAVGSQIIARSTVKALRKDVTAKCYGGDVSRKKKLLNKQKEGKKRMKQVGNVEVPQEAFLAVLKLNE</sequence>
<protein>
    <recommendedName>
        <fullName evidence="1">Elongation factor 4</fullName>
        <shortName evidence="1">EF-4</shortName>
        <ecNumber evidence="1">3.6.5.n1</ecNumber>
    </recommendedName>
    <alternativeName>
        <fullName evidence="1">Ribosomal back-translocase LepA</fullName>
    </alternativeName>
</protein>
<evidence type="ECO:0000255" key="1">
    <source>
        <dbReference type="HAMAP-Rule" id="MF_00071"/>
    </source>
</evidence>
<comment type="function">
    <text evidence="1">Required for accurate and efficient protein synthesis under certain stress conditions. May act as a fidelity factor of the translation reaction, by catalyzing a one-codon backward translocation of tRNAs on improperly translocated ribosomes. Back-translocation proceeds from a post-translocation (POST) complex to a pre-translocation (PRE) complex, thus giving elongation factor G a second chance to translocate the tRNAs correctly. Binds to ribosomes in a GTP-dependent manner.</text>
</comment>
<comment type="catalytic activity">
    <reaction evidence="1">
        <text>GTP + H2O = GDP + phosphate + H(+)</text>
        <dbReference type="Rhea" id="RHEA:19669"/>
        <dbReference type="ChEBI" id="CHEBI:15377"/>
        <dbReference type="ChEBI" id="CHEBI:15378"/>
        <dbReference type="ChEBI" id="CHEBI:37565"/>
        <dbReference type="ChEBI" id="CHEBI:43474"/>
        <dbReference type="ChEBI" id="CHEBI:58189"/>
        <dbReference type="EC" id="3.6.5.n1"/>
    </reaction>
</comment>
<comment type="subcellular location">
    <subcellularLocation>
        <location evidence="1">Cell inner membrane</location>
        <topology evidence="1">Peripheral membrane protein</topology>
        <orientation evidence="1">Cytoplasmic side</orientation>
    </subcellularLocation>
</comment>
<comment type="similarity">
    <text evidence="1">Belongs to the TRAFAC class translation factor GTPase superfamily. Classic translation factor GTPase family. LepA subfamily.</text>
</comment>
<accession>A1RMC9</accession>
<reference key="1">
    <citation type="submission" date="2006-12" db="EMBL/GenBank/DDBJ databases">
        <title>Complete sequence of Shewanella sp. W3-18-1.</title>
        <authorList>
            <consortium name="US DOE Joint Genome Institute"/>
            <person name="Copeland A."/>
            <person name="Lucas S."/>
            <person name="Lapidus A."/>
            <person name="Barry K."/>
            <person name="Detter J.C."/>
            <person name="Glavina del Rio T."/>
            <person name="Hammon N."/>
            <person name="Israni S."/>
            <person name="Dalin E."/>
            <person name="Tice H."/>
            <person name="Pitluck S."/>
            <person name="Chain P."/>
            <person name="Malfatti S."/>
            <person name="Shin M."/>
            <person name="Vergez L."/>
            <person name="Schmutz J."/>
            <person name="Larimer F."/>
            <person name="Land M."/>
            <person name="Hauser L."/>
            <person name="Kyrpides N."/>
            <person name="Lykidis A."/>
            <person name="Tiedje J."/>
            <person name="Richardson P."/>
        </authorList>
    </citation>
    <scope>NUCLEOTIDE SEQUENCE [LARGE SCALE GENOMIC DNA]</scope>
    <source>
        <strain>W3-18-1</strain>
    </source>
</reference>
<proteinExistence type="inferred from homology"/>
<keyword id="KW-0997">Cell inner membrane</keyword>
<keyword id="KW-1003">Cell membrane</keyword>
<keyword id="KW-0342">GTP-binding</keyword>
<keyword id="KW-0378">Hydrolase</keyword>
<keyword id="KW-0472">Membrane</keyword>
<keyword id="KW-0547">Nucleotide-binding</keyword>
<keyword id="KW-0648">Protein biosynthesis</keyword>